<keyword id="KW-1185">Reference proteome</keyword>
<keyword id="KW-0687">Ribonucleoprotein</keyword>
<keyword id="KW-0689">Ribosomal protein</keyword>
<keyword id="KW-0694">RNA-binding</keyword>
<keyword id="KW-0699">rRNA-binding</keyword>
<comment type="function">
    <text evidence="1">One of the primary rRNA binding proteins, it binds directly to 16S rRNA where it nucleates assembly of the body of the 30S subunit.</text>
</comment>
<comment type="function">
    <text evidence="1">With S5 and S12 plays an important role in translational accuracy.</text>
</comment>
<comment type="subunit">
    <text evidence="1">Part of the 30S ribosomal subunit. Contacts protein S5. The interaction surface between S4 and S5 is involved in control of translational fidelity.</text>
</comment>
<comment type="similarity">
    <text evidence="1">Belongs to the universal ribosomal protein uS4 family.</text>
</comment>
<comment type="sequence caution" evidence="3">
    <conflict type="erroneous initiation">
        <sequence resource="EMBL-CDS" id="ABI61426"/>
    </conflict>
</comment>
<reference key="1">
    <citation type="journal article" date="2007" name="J. Bacteriol.">
        <title>Genome sequence analysis of the emerging human pathogenic acetic acid bacterium Granulibacter bethesdensis.</title>
        <authorList>
            <person name="Greenberg D.E."/>
            <person name="Porcella S.F."/>
            <person name="Zelazny A.M."/>
            <person name="Virtaneva K."/>
            <person name="Sturdevant D.E."/>
            <person name="Kupko J.J. III"/>
            <person name="Barbian K.D."/>
            <person name="Babar A."/>
            <person name="Dorward D.W."/>
            <person name="Holland S.M."/>
        </authorList>
    </citation>
    <scope>NUCLEOTIDE SEQUENCE [LARGE SCALE GENOMIC DNA]</scope>
    <source>
        <strain>ATCC BAA-1260 / CGDNIH1</strain>
    </source>
</reference>
<evidence type="ECO:0000255" key="1">
    <source>
        <dbReference type="HAMAP-Rule" id="MF_01306"/>
    </source>
</evidence>
<evidence type="ECO:0000256" key="2">
    <source>
        <dbReference type="SAM" id="MobiDB-lite"/>
    </source>
</evidence>
<evidence type="ECO:0000305" key="3"/>
<gene>
    <name evidence="1" type="primary">rpsD</name>
    <name type="ordered locus">GbCGDNIH1_0528</name>
</gene>
<sequence>MTKRAESKFKINRRLGVNLWGRAKSPLNKRDYAPGQHGQRRKGKPSDFGIQLMAKQKLKGYYGNISEKQFRKYYEEAVRRKGDTSENLIELLERRLDAVIYRMKFALTPFAARQFVNHGHVLVNGKRVNIPSYLVKVGDVVEVREKSKQLAMVLDATQSGERDVPEYLHVDHRLMKGTYARYPKLSDVPYPVQMEPNLVIEYYSR</sequence>
<organism>
    <name type="scientific">Granulibacter bethesdensis (strain ATCC BAA-1260 / CGDNIH1)</name>
    <dbReference type="NCBI Taxonomy" id="391165"/>
    <lineage>
        <taxon>Bacteria</taxon>
        <taxon>Pseudomonadati</taxon>
        <taxon>Pseudomonadota</taxon>
        <taxon>Alphaproteobacteria</taxon>
        <taxon>Acetobacterales</taxon>
        <taxon>Acetobacteraceae</taxon>
        <taxon>Granulibacter</taxon>
    </lineage>
</organism>
<feature type="chain" id="PRO_0000293455" description="Small ribosomal subunit protein uS4">
    <location>
        <begin position="1"/>
        <end position="205"/>
    </location>
</feature>
<feature type="domain" description="S4 RNA-binding" evidence="1">
    <location>
        <begin position="118"/>
        <end position="178"/>
    </location>
</feature>
<feature type="region of interest" description="Disordered" evidence="2">
    <location>
        <begin position="27"/>
        <end position="46"/>
    </location>
</feature>
<accession>Q0BUS6</accession>
<protein>
    <recommendedName>
        <fullName evidence="1">Small ribosomal subunit protein uS4</fullName>
    </recommendedName>
    <alternativeName>
        <fullName evidence="3">30S ribosomal protein S4</fullName>
    </alternativeName>
</protein>
<name>RS4_GRABC</name>
<dbReference type="EMBL" id="CP000394">
    <property type="protein sequence ID" value="ABI61426.1"/>
    <property type="status" value="ALT_INIT"/>
    <property type="molecule type" value="Genomic_DNA"/>
</dbReference>
<dbReference type="RefSeq" id="WP_025286076.1">
    <property type="nucleotide sequence ID" value="NC_008343.2"/>
</dbReference>
<dbReference type="SMR" id="Q0BUS6"/>
<dbReference type="STRING" id="391165.GbCGDNIH1_0528"/>
<dbReference type="GeneID" id="69744783"/>
<dbReference type="KEGG" id="gbe:GbCGDNIH1_0528"/>
<dbReference type="eggNOG" id="COG0522">
    <property type="taxonomic scope" value="Bacteria"/>
</dbReference>
<dbReference type="HOGENOM" id="CLU_092403_0_0_5"/>
<dbReference type="OrthoDB" id="9803672at2"/>
<dbReference type="Proteomes" id="UP000001963">
    <property type="component" value="Chromosome"/>
</dbReference>
<dbReference type="GO" id="GO:0015935">
    <property type="term" value="C:small ribosomal subunit"/>
    <property type="evidence" value="ECO:0007669"/>
    <property type="project" value="InterPro"/>
</dbReference>
<dbReference type="GO" id="GO:0019843">
    <property type="term" value="F:rRNA binding"/>
    <property type="evidence" value="ECO:0007669"/>
    <property type="project" value="UniProtKB-UniRule"/>
</dbReference>
<dbReference type="GO" id="GO:0003735">
    <property type="term" value="F:structural constituent of ribosome"/>
    <property type="evidence" value="ECO:0007669"/>
    <property type="project" value="InterPro"/>
</dbReference>
<dbReference type="GO" id="GO:0042274">
    <property type="term" value="P:ribosomal small subunit biogenesis"/>
    <property type="evidence" value="ECO:0007669"/>
    <property type="project" value="TreeGrafter"/>
</dbReference>
<dbReference type="GO" id="GO:0006412">
    <property type="term" value="P:translation"/>
    <property type="evidence" value="ECO:0007669"/>
    <property type="project" value="UniProtKB-UniRule"/>
</dbReference>
<dbReference type="CDD" id="cd00165">
    <property type="entry name" value="S4"/>
    <property type="match status" value="1"/>
</dbReference>
<dbReference type="FunFam" id="3.10.290.10:FF:000001">
    <property type="entry name" value="30S ribosomal protein S4"/>
    <property type="match status" value="1"/>
</dbReference>
<dbReference type="Gene3D" id="1.10.1050.10">
    <property type="entry name" value="Ribosomal Protein S4 Delta 41, Chain A, domain 1"/>
    <property type="match status" value="1"/>
</dbReference>
<dbReference type="Gene3D" id="3.10.290.10">
    <property type="entry name" value="RNA-binding S4 domain"/>
    <property type="match status" value="1"/>
</dbReference>
<dbReference type="HAMAP" id="MF_01306_B">
    <property type="entry name" value="Ribosomal_uS4_B"/>
    <property type="match status" value="1"/>
</dbReference>
<dbReference type="InterPro" id="IPR022801">
    <property type="entry name" value="Ribosomal_uS4"/>
</dbReference>
<dbReference type="InterPro" id="IPR005709">
    <property type="entry name" value="Ribosomal_uS4_bac-type"/>
</dbReference>
<dbReference type="InterPro" id="IPR018079">
    <property type="entry name" value="Ribosomal_uS4_CS"/>
</dbReference>
<dbReference type="InterPro" id="IPR001912">
    <property type="entry name" value="Ribosomal_uS4_N"/>
</dbReference>
<dbReference type="InterPro" id="IPR002942">
    <property type="entry name" value="S4_RNA-bd"/>
</dbReference>
<dbReference type="InterPro" id="IPR036986">
    <property type="entry name" value="S4_RNA-bd_sf"/>
</dbReference>
<dbReference type="NCBIfam" id="NF003717">
    <property type="entry name" value="PRK05327.1"/>
    <property type="match status" value="1"/>
</dbReference>
<dbReference type="NCBIfam" id="TIGR01017">
    <property type="entry name" value="rpsD_bact"/>
    <property type="match status" value="1"/>
</dbReference>
<dbReference type="PANTHER" id="PTHR11831">
    <property type="entry name" value="30S 40S RIBOSOMAL PROTEIN"/>
    <property type="match status" value="1"/>
</dbReference>
<dbReference type="PANTHER" id="PTHR11831:SF4">
    <property type="entry name" value="SMALL RIBOSOMAL SUBUNIT PROTEIN US4M"/>
    <property type="match status" value="1"/>
</dbReference>
<dbReference type="Pfam" id="PF00163">
    <property type="entry name" value="Ribosomal_S4"/>
    <property type="match status" value="1"/>
</dbReference>
<dbReference type="Pfam" id="PF01479">
    <property type="entry name" value="S4"/>
    <property type="match status" value="1"/>
</dbReference>
<dbReference type="SMART" id="SM01390">
    <property type="entry name" value="Ribosomal_S4"/>
    <property type="match status" value="1"/>
</dbReference>
<dbReference type="SMART" id="SM00363">
    <property type="entry name" value="S4"/>
    <property type="match status" value="1"/>
</dbReference>
<dbReference type="SUPFAM" id="SSF55174">
    <property type="entry name" value="Alpha-L RNA-binding motif"/>
    <property type="match status" value="1"/>
</dbReference>
<dbReference type="PROSITE" id="PS00632">
    <property type="entry name" value="RIBOSOMAL_S4"/>
    <property type="match status" value="1"/>
</dbReference>
<dbReference type="PROSITE" id="PS50889">
    <property type="entry name" value="S4"/>
    <property type="match status" value="1"/>
</dbReference>
<proteinExistence type="inferred from homology"/>